<name>ECPB_ECO24</name>
<accession>A7ZI26</accession>
<proteinExistence type="inferred from homology"/>
<dbReference type="EMBL" id="CP000800">
    <property type="protein sequence ID" value="ABV20964.1"/>
    <property type="molecule type" value="Genomic_DNA"/>
</dbReference>
<dbReference type="RefSeq" id="WP_000716398.1">
    <property type="nucleotide sequence ID" value="NC_009801.1"/>
</dbReference>
<dbReference type="SMR" id="A7ZI26"/>
<dbReference type="GeneID" id="75204621"/>
<dbReference type="KEGG" id="ecw:EcE24377A_0302"/>
<dbReference type="HOGENOM" id="CLU_106652_0_0_6"/>
<dbReference type="Proteomes" id="UP000001122">
    <property type="component" value="Chromosome"/>
</dbReference>
<dbReference type="Gene3D" id="2.60.40.10">
    <property type="entry name" value="Immunoglobulins"/>
    <property type="match status" value="1"/>
</dbReference>
<dbReference type="InterPro" id="IPR040695">
    <property type="entry name" value="EcpB_C"/>
</dbReference>
<dbReference type="InterPro" id="IPR013783">
    <property type="entry name" value="Ig-like_fold"/>
</dbReference>
<dbReference type="InterPro" id="IPR008962">
    <property type="entry name" value="PapD-like_sf"/>
</dbReference>
<dbReference type="Pfam" id="PF18649">
    <property type="entry name" value="EcpB_C"/>
    <property type="match status" value="1"/>
</dbReference>
<dbReference type="SUPFAM" id="SSF49354">
    <property type="entry name" value="PapD-like"/>
    <property type="match status" value="1"/>
</dbReference>
<comment type="function">
    <text evidence="1">Part of the ecpRABCDE operon, which encodes the E.coli common pilus (ECP). ECP is found in both commensal and pathogenic strains and plays a dual role in early-stage biofilm development and host cell recognition (By similarity).</text>
</comment>
<comment type="induction">
    <text evidence="1">Negatively regulated by H-NS. Positively regulated by IHF and EcpR (By similarity).</text>
</comment>
<comment type="similarity">
    <text evidence="3">Belongs to the EcpB/EcpE family.</text>
</comment>
<protein>
    <recommendedName>
        <fullName>Probable fimbrial chaperone EcpB</fullName>
    </recommendedName>
</protein>
<sequence length="222" mass="24517">MKKHLLPLALLFSGISPAQALDVGDISSFMNSDSSTLSKTIKNSTDSGRLINIRLERLSSPLDDGQVISMDKPDELLLTPASLLLPAQASEVIRFFYKGPADEKERYYRIVWFDQALSDAQRDNANRSAVATASARIGTILVVAPRQANYHFQYANGSLTNTGNATLRILAYGPCLKAANGKECKENYYLMPGKSRRFTRVDTADNKGRVALWQGDKFIPVK</sequence>
<organism>
    <name type="scientific">Escherichia coli O139:H28 (strain E24377A / ETEC)</name>
    <dbReference type="NCBI Taxonomy" id="331111"/>
    <lineage>
        <taxon>Bacteria</taxon>
        <taxon>Pseudomonadati</taxon>
        <taxon>Pseudomonadota</taxon>
        <taxon>Gammaproteobacteria</taxon>
        <taxon>Enterobacterales</taxon>
        <taxon>Enterobacteriaceae</taxon>
        <taxon>Escherichia</taxon>
    </lineage>
</organism>
<feature type="signal peptide" evidence="2">
    <location>
        <begin position="1"/>
        <end position="20"/>
    </location>
</feature>
<feature type="chain" id="PRO_0000369160" description="Probable fimbrial chaperone EcpB">
    <location>
        <begin position="21"/>
        <end position="222"/>
    </location>
</feature>
<gene>
    <name type="primary">ecpB</name>
    <name type="synonym">matC</name>
    <name type="ordered locus">EcE24377A_0302</name>
</gene>
<keyword id="KW-0143">Chaperone</keyword>
<keyword id="KW-1029">Fimbrium biogenesis</keyword>
<keyword id="KW-1185">Reference proteome</keyword>
<keyword id="KW-0732">Signal</keyword>
<reference key="1">
    <citation type="journal article" date="2008" name="J. Bacteriol.">
        <title>The pangenome structure of Escherichia coli: comparative genomic analysis of E. coli commensal and pathogenic isolates.</title>
        <authorList>
            <person name="Rasko D.A."/>
            <person name="Rosovitz M.J."/>
            <person name="Myers G.S.A."/>
            <person name="Mongodin E.F."/>
            <person name="Fricke W.F."/>
            <person name="Gajer P."/>
            <person name="Crabtree J."/>
            <person name="Sebaihia M."/>
            <person name="Thomson N.R."/>
            <person name="Chaudhuri R."/>
            <person name="Henderson I.R."/>
            <person name="Sperandio V."/>
            <person name="Ravel J."/>
        </authorList>
    </citation>
    <scope>NUCLEOTIDE SEQUENCE [LARGE SCALE GENOMIC DNA]</scope>
    <source>
        <strain>E24377A / ETEC</strain>
    </source>
</reference>
<evidence type="ECO:0000250" key="1"/>
<evidence type="ECO:0000255" key="2"/>
<evidence type="ECO:0000305" key="3"/>